<dbReference type="EMBL" id="U21094">
    <property type="protein sequence ID" value="AAB67520.1"/>
    <property type="molecule type" value="Genomic_DNA"/>
</dbReference>
<dbReference type="EMBL" id="Z30582">
    <property type="protein sequence ID" value="CAA83058.1"/>
    <property type="molecule type" value="Genomic_DNA"/>
</dbReference>
<dbReference type="EMBL" id="BK006945">
    <property type="protein sequence ID" value="DAA09741.1"/>
    <property type="molecule type" value="Genomic_DNA"/>
</dbReference>
<dbReference type="PIR" id="S59408">
    <property type="entry name" value="S59408"/>
</dbReference>
<dbReference type="RefSeq" id="NP_013545.3">
    <property type="nucleotide sequence ID" value="NM_001182328.3"/>
</dbReference>
<dbReference type="PDB" id="3K8P">
    <property type="method" value="X-ray"/>
    <property type="resolution" value="2.60 A"/>
    <property type="chains" value="D=1-709"/>
</dbReference>
<dbReference type="PDB" id="8EKI">
    <property type="method" value="EM"/>
    <property type="resolution" value="4.50 A"/>
    <property type="chains" value="D=1-709"/>
</dbReference>
<dbReference type="PDBsum" id="3K8P"/>
<dbReference type="PDBsum" id="8EKI"/>
<dbReference type="EMDB" id="EMD-28204"/>
<dbReference type="SMR" id="Q12745"/>
<dbReference type="BioGRID" id="31699">
    <property type="interactions" value="386"/>
</dbReference>
<dbReference type="ComplexPortal" id="CPX-1786">
    <property type="entry name" value="Dsl1 tethering complex"/>
</dbReference>
<dbReference type="DIP" id="DIP-941N"/>
<dbReference type="FunCoup" id="Q12745">
    <property type="interactions" value="61"/>
</dbReference>
<dbReference type="IntAct" id="Q12745">
    <property type="interactions" value="18"/>
</dbReference>
<dbReference type="STRING" id="4932.YLR440C"/>
<dbReference type="PaxDb" id="4932-YLR440C"/>
<dbReference type="PeptideAtlas" id="Q12745"/>
<dbReference type="EnsemblFungi" id="YLR440C_mRNA">
    <property type="protein sequence ID" value="YLR440C"/>
    <property type="gene ID" value="YLR440C"/>
</dbReference>
<dbReference type="GeneID" id="851161"/>
<dbReference type="KEGG" id="sce:YLR440C"/>
<dbReference type="AGR" id="SGD:S000004432"/>
<dbReference type="SGD" id="S000004432">
    <property type="gene designation" value="SEC39"/>
</dbReference>
<dbReference type="VEuPathDB" id="FungiDB:YLR440C"/>
<dbReference type="eggNOG" id="ENOG502RS0W">
    <property type="taxonomic scope" value="Eukaryota"/>
</dbReference>
<dbReference type="HOGENOM" id="CLU_389403_0_0_1"/>
<dbReference type="InParanoid" id="Q12745"/>
<dbReference type="OMA" id="KFVDPNW"/>
<dbReference type="OrthoDB" id="342024at2759"/>
<dbReference type="BioCyc" id="YEAST:G3O-32496-MONOMER"/>
<dbReference type="BioGRID-ORCS" id="851161">
    <property type="hits" value="0 hits in 10 CRISPR screens"/>
</dbReference>
<dbReference type="EvolutionaryTrace" id="Q12745"/>
<dbReference type="PRO" id="PR:Q12745"/>
<dbReference type="Proteomes" id="UP000002311">
    <property type="component" value="Chromosome XII"/>
</dbReference>
<dbReference type="RNAct" id="Q12745">
    <property type="molecule type" value="protein"/>
</dbReference>
<dbReference type="GO" id="GO:0070939">
    <property type="term" value="C:Dsl1/NZR complex"/>
    <property type="evidence" value="ECO:0000314"/>
    <property type="project" value="SGD"/>
</dbReference>
<dbReference type="GO" id="GO:0005783">
    <property type="term" value="C:endoplasmic reticulum"/>
    <property type="evidence" value="ECO:0000314"/>
    <property type="project" value="SGD"/>
</dbReference>
<dbReference type="GO" id="GO:0005789">
    <property type="term" value="C:endoplasmic reticulum membrane"/>
    <property type="evidence" value="ECO:0000314"/>
    <property type="project" value="SGD"/>
</dbReference>
<dbReference type="GO" id="GO:0005635">
    <property type="term" value="C:nuclear envelope"/>
    <property type="evidence" value="ECO:0000314"/>
    <property type="project" value="SGD"/>
</dbReference>
<dbReference type="GO" id="GO:0032581">
    <property type="term" value="P:ER-dependent peroxisome organization"/>
    <property type="evidence" value="ECO:0000315"/>
    <property type="project" value="SGD"/>
</dbReference>
<dbReference type="GO" id="GO:0015031">
    <property type="term" value="P:protein transport"/>
    <property type="evidence" value="ECO:0007669"/>
    <property type="project" value="UniProtKB-KW"/>
</dbReference>
<dbReference type="GO" id="GO:0006890">
    <property type="term" value="P:retrograde vesicle-mediated transport, Golgi to endoplasmic reticulum"/>
    <property type="evidence" value="ECO:0000314"/>
    <property type="project" value="ComplexPortal"/>
</dbReference>
<dbReference type="GO" id="GO:0016192">
    <property type="term" value="P:vesicle-mediated transport"/>
    <property type="evidence" value="ECO:0000315"/>
    <property type="project" value="SGD"/>
</dbReference>
<dbReference type="InterPro" id="IPR013244">
    <property type="entry name" value="Sec39_domain"/>
</dbReference>
<dbReference type="PANTHER" id="PTHR40787:SF3">
    <property type="entry name" value="PROTEIN TRANSPORT PROTEIN SEC39"/>
    <property type="match status" value="1"/>
</dbReference>
<dbReference type="PANTHER" id="PTHR40787">
    <property type="entry name" value="SECRETED PROTEIN"/>
    <property type="match status" value="1"/>
</dbReference>
<dbReference type="Pfam" id="PF08314">
    <property type="entry name" value="Sec39"/>
    <property type="match status" value="1"/>
</dbReference>
<gene>
    <name evidence="6" type="primary">SEC39</name>
    <name type="synonym">DSL3</name>
    <name type="ordered locus">YLR440C</name>
</gene>
<protein>
    <recommendedName>
        <fullName>Protein transport protein SEC39</fullName>
    </recommendedName>
    <alternativeName>
        <fullName>Dependent on SLY1-20 protein 3</fullName>
    </alternativeName>
</protein>
<feature type="chain" id="PRO_0000234109" description="Protein transport protein SEC39">
    <location>
        <begin position="1"/>
        <end position="709"/>
    </location>
</feature>
<feature type="helix" evidence="8">
    <location>
        <begin position="33"/>
        <end position="42"/>
    </location>
</feature>
<feature type="helix" evidence="8">
    <location>
        <begin position="49"/>
        <end position="53"/>
    </location>
</feature>
<feature type="helix" evidence="8">
    <location>
        <begin position="54"/>
        <end position="60"/>
    </location>
</feature>
<feature type="helix" evidence="8">
    <location>
        <begin position="102"/>
        <end position="104"/>
    </location>
</feature>
<feature type="helix" evidence="8">
    <location>
        <begin position="105"/>
        <end position="111"/>
    </location>
</feature>
<feature type="turn" evidence="8">
    <location>
        <begin position="112"/>
        <end position="114"/>
    </location>
</feature>
<feature type="helix" evidence="8">
    <location>
        <begin position="120"/>
        <end position="132"/>
    </location>
</feature>
<feature type="turn" evidence="8">
    <location>
        <begin position="139"/>
        <end position="142"/>
    </location>
</feature>
<feature type="helix" evidence="8">
    <location>
        <begin position="143"/>
        <end position="147"/>
    </location>
</feature>
<feature type="helix" evidence="8">
    <location>
        <begin position="156"/>
        <end position="164"/>
    </location>
</feature>
<feature type="helix" evidence="8">
    <location>
        <begin position="166"/>
        <end position="175"/>
    </location>
</feature>
<feature type="helix" evidence="8">
    <location>
        <begin position="182"/>
        <end position="187"/>
    </location>
</feature>
<feature type="helix" evidence="8">
    <location>
        <begin position="190"/>
        <end position="197"/>
    </location>
</feature>
<feature type="helix" evidence="8">
    <location>
        <begin position="212"/>
        <end position="216"/>
    </location>
</feature>
<feature type="helix" evidence="8">
    <location>
        <begin position="218"/>
        <end position="225"/>
    </location>
</feature>
<feature type="helix" evidence="8">
    <location>
        <begin position="228"/>
        <end position="235"/>
    </location>
</feature>
<feature type="turn" evidence="8">
    <location>
        <begin position="238"/>
        <end position="240"/>
    </location>
</feature>
<feature type="helix" evidence="8">
    <location>
        <begin position="246"/>
        <end position="261"/>
    </location>
</feature>
<feature type="helix" evidence="8">
    <location>
        <begin position="270"/>
        <end position="289"/>
    </location>
</feature>
<feature type="helix" evidence="8">
    <location>
        <begin position="294"/>
        <end position="305"/>
    </location>
</feature>
<feature type="strand" evidence="8">
    <location>
        <begin position="310"/>
        <end position="314"/>
    </location>
</feature>
<feature type="turn" evidence="8">
    <location>
        <begin position="315"/>
        <end position="317"/>
    </location>
</feature>
<feature type="strand" evidence="8">
    <location>
        <begin position="318"/>
        <end position="321"/>
    </location>
</feature>
<feature type="helix" evidence="8">
    <location>
        <begin position="322"/>
        <end position="334"/>
    </location>
</feature>
<feature type="helix" evidence="8">
    <location>
        <begin position="341"/>
        <end position="348"/>
    </location>
</feature>
<feature type="helix" evidence="8">
    <location>
        <begin position="352"/>
        <end position="367"/>
    </location>
</feature>
<feature type="helix" evidence="8">
    <location>
        <begin position="373"/>
        <end position="382"/>
    </location>
</feature>
<feature type="turn" evidence="8">
    <location>
        <begin position="383"/>
        <end position="385"/>
    </location>
</feature>
<feature type="strand" evidence="8">
    <location>
        <begin position="392"/>
        <end position="394"/>
    </location>
</feature>
<feature type="helix" evidence="8">
    <location>
        <begin position="399"/>
        <end position="412"/>
    </location>
</feature>
<feature type="helix" evidence="8">
    <location>
        <begin position="416"/>
        <end position="425"/>
    </location>
</feature>
<feature type="helix" evidence="8">
    <location>
        <begin position="432"/>
        <end position="448"/>
    </location>
</feature>
<feature type="helix" evidence="8">
    <location>
        <begin position="457"/>
        <end position="477"/>
    </location>
</feature>
<feature type="helix" evidence="8">
    <location>
        <begin position="479"/>
        <end position="494"/>
    </location>
</feature>
<feature type="helix" evidence="8">
    <location>
        <begin position="515"/>
        <end position="520"/>
    </location>
</feature>
<feature type="turn" evidence="8">
    <location>
        <begin position="521"/>
        <end position="523"/>
    </location>
</feature>
<feature type="helix" evidence="8">
    <location>
        <begin position="526"/>
        <end position="535"/>
    </location>
</feature>
<feature type="helix" evidence="8">
    <location>
        <begin position="539"/>
        <end position="541"/>
    </location>
</feature>
<feature type="helix" evidence="8">
    <location>
        <begin position="543"/>
        <end position="556"/>
    </location>
</feature>
<feature type="helix" evidence="8">
    <location>
        <begin position="565"/>
        <end position="582"/>
    </location>
</feature>
<feature type="helix" evidence="8">
    <location>
        <begin position="586"/>
        <end position="603"/>
    </location>
</feature>
<feature type="helix" evidence="8">
    <location>
        <begin position="605"/>
        <end position="624"/>
    </location>
</feature>
<feature type="helix" evidence="8">
    <location>
        <begin position="631"/>
        <end position="633"/>
    </location>
</feature>
<feature type="helix" evidence="8">
    <location>
        <begin position="637"/>
        <end position="653"/>
    </location>
</feature>
<feature type="helix" evidence="8">
    <location>
        <begin position="656"/>
        <end position="658"/>
    </location>
</feature>
<feature type="helix" evidence="8">
    <location>
        <begin position="659"/>
        <end position="673"/>
    </location>
</feature>
<proteinExistence type="evidence at protein level"/>
<accession>Q12745</accession>
<accession>D6VZ75</accession>
<accession>Q7LHI0</accession>
<reference evidence="6" key="1">
    <citation type="journal article" date="1997" name="Nature">
        <title>The nucleotide sequence of Saccharomyces cerevisiae chromosome XII.</title>
        <authorList>
            <person name="Johnston M."/>
            <person name="Hillier L.W."/>
            <person name="Riles L."/>
            <person name="Albermann K."/>
            <person name="Andre B."/>
            <person name="Ansorge W."/>
            <person name="Benes V."/>
            <person name="Brueckner M."/>
            <person name="Delius H."/>
            <person name="Dubois E."/>
            <person name="Duesterhoeft A."/>
            <person name="Entian K.-D."/>
            <person name="Floeth M."/>
            <person name="Goffeau A."/>
            <person name="Hebling U."/>
            <person name="Heumann K."/>
            <person name="Heuss-Neitzel D."/>
            <person name="Hilbert H."/>
            <person name="Hilger F."/>
            <person name="Kleine K."/>
            <person name="Koetter P."/>
            <person name="Louis E.J."/>
            <person name="Messenguy F."/>
            <person name="Mewes H.-W."/>
            <person name="Miosga T."/>
            <person name="Moestl D."/>
            <person name="Mueller-Auer S."/>
            <person name="Nentwich U."/>
            <person name="Obermaier B."/>
            <person name="Piravandi E."/>
            <person name="Pohl T.M."/>
            <person name="Portetelle D."/>
            <person name="Purnelle B."/>
            <person name="Rechmann S."/>
            <person name="Rieger M."/>
            <person name="Rinke M."/>
            <person name="Rose M."/>
            <person name="Scharfe M."/>
            <person name="Scherens B."/>
            <person name="Scholler P."/>
            <person name="Schwager C."/>
            <person name="Schwarz S."/>
            <person name="Underwood A.P."/>
            <person name="Urrestarazu L.A."/>
            <person name="Vandenbol M."/>
            <person name="Verhasselt P."/>
            <person name="Vierendeels F."/>
            <person name="Voet M."/>
            <person name="Volckaert G."/>
            <person name="Voss H."/>
            <person name="Wambutt R."/>
            <person name="Wedler E."/>
            <person name="Wedler H."/>
            <person name="Zimmermann F.K."/>
            <person name="Zollner A."/>
            <person name="Hani J."/>
            <person name="Hoheisel J.D."/>
        </authorList>
    </citation>
    <scope>NUCLEOTIDE SEQUENCE [LARGE SCALE GENOMIC DNA]</scope>
    <source>
        <strain>ATCC 204508 / S288c</strain>
    </source>
</reference>
<reference key="2">
    <citation type="journal article" date="2014" name="G3 (Bethesda)">
        <title>The reference genome sequence of Saccharomyces cerevisiae: Then and now.</title>
        <authorList>
            <person name="Engel S.R."/>
            <person name="Dietrich F.S."/>
            <person name="Fisk D.G."/>
            <person name="Binkley G."/>
            <person name="Balakrishnan R."/>
            <person name="Costanzo M.C."/>
            <person name="Dwight S.S."/>
            <person name="Hitz B.C."/>
            <person name="Karra K."/>
            <person name="Nash R.S."/>
            <person name="Weng S."/>
            <person name="Wong E.D."/>
            <person name="Lloyd P."/>
            <person name="Skrzypek M.S."/>
            <person name="Miyasato S.R."/>
            <person name="Simison M."/>
            <person name="Cherry J.M."/>
        </authorList>
    </citation>
    <scope>GENOME REANNOTATION</scope>
    <source>
        <strain>ATCC 204508 / S288c</strain>
    </source>
</reference>
<reference evidence="5 7" key="3">
    <citation type="journal article" date="1995" name="Gene">
        <title>Gene MRP-L4, encoding mitochondrial ribosomal protein YmL4, is indispensable for proper non-respiratory cell functions in yeast.</title>
        <authorList>
            <person name="Graack H.-R."/>
            <person name="Grohmann L."/>
            <person name="Kitakawa M."/>
            <person name="Goldschmidt-Reisin S."/>
        </authorList>
    </citation>
    <scope>NUCLEOTIDE SEQUENCE [GENOMIC DNA] OF 548-709</scope>
    <source>
        <strain evidence="7">07173</strain>
    </source>
</reference>
<reference evidence="5" key="4">
    <citation type="journal article" date="2004" name="Cell">
        <title>Exploration of essential gene functions via titratable promoter alleles.</title>
        <authorList>
            <person name="Mnaimneh S."/>
            <person name="Davierwala A.P."/>
            <person name="Haynes J."/>
            <person name="Moffat J."/>
            <person name="Peng W.-T."/>
            <person name="Zhang W."/>
            <person name="Yang X."/>
            <person name="Pootoolal J."/>
            <person name="Chua G."/>
            <person name="Lopez A."/>
            <person name="Trochesset M."/>
            <person name="Morse D."/>
            <person name="Krogan N.J."/>
            <person name="Hiley S.L."/>
            <person name="Li Z."/>
            <person name="Morris Q."/>
            <person name="Grigull J."/>
            <person name="Mitsakakis N."/>
            <person name="Roberts C.J."/>
            <person name="Greenblatt J.F."/>
            <person name="Boone C."/>
            <person name="Kaiser C.A."/>
            <person name="Andrews B.J."/>
            <person name="Hughes T.R."/>
        </authorList>
    </citation>
    <scope>FUNCTION</scope>
</reference>
<reference evidence="5" key="5">
    <citation type="journal article" date="2005" name="J. Gen. Appl. Microbiol.">
        <title>Isolation of Saccharomyces cerevisiae RNase T1 hypersensitive (rns) mutants and genetic analysis of the RNS1/DSL1 gene.</title>
        <authorList>
            <person name="Ishikawa T."/>
            <person name="Unno K."/>
            <person name="Nonaka G."/>
            <person name="Nakajima H."/>
            <person name="Kitamoto K."/>
        </authorList>
    </citation>
    <scope>INTERACTION WITH TIP20</scope>
</reference>
<reference evidence="5" key="6">
    <citation type="journal article" date="2005" name="Mol. Biol. Cell">
        <title>Dsl1p, Tip20p, and the novel Dsl3(Sec39) protein are required for the stability of the Q/t-SNARE complex at the endoplasmic reticulum in yeast.</title>
        <authorList>
            <person name="Kraynack B.A."/>
            <person name="Chan A."/>
            <person name="Rosenthal E."/>
            <person name="Essid M."/>
            <person name="Umansky B."/>
            <person name="Waters M.G."/>
            <person name="Schmitt H.D."/>
        </authorList>
    </citation>
    <scope>FUNCTION</scope>
    <scope>IDENTIFICATION IN A COMPLEX WITH DSL1; TIP20; SEC20; USE1 AND UFE1</scope>
    <scope>SUBCELLULAR LOCATION</scope>
</reference>
<reference evidence="5" key="7">
    <citation type="journal article" date="2006" name="Nature">
        <title>Proteome survey reveals modularity of the yeast cell machinery.</title>
        <authorList>
            <person name="Gavin A.-C."/>
            <person name="Aloy P."/>
            <person name="Grandi P."/>
            <person name="Krause R."/>
            <person name="Boesche M."/>
            <person name="Marzioch M."/>
            <person name="Rau C."/>
            <person name="Jensen L.J."/>
            <person name="Bastuck S."/>
            <person name="Duempelfeld B."/>
            <person name="Edelmann A."/>
            <person name="Heurtier M.-A."/>
            <person name="Hoffman V."/>
            <person name="Hoefert C."/>
            <person name="Klein K."/>
            <person name="Hudak M."/>
            <person name="Michon A.-M."/>
            <person name="Schelder M."/>
            <person name="Schirle M."/>
            <person name="Remor M."/>
            <person name="Rudi T."/>
            <person name="Hooper S."/>
            <person name="Bauer A."/>
            <person name="Bouwmeester T."/>
            <person name="Casari G."/>
            <person name="Drewes G."/>
            <person name="Neubauer G."/>
            <person name="Rick J.M."/>
            <person name="Kuster B."/>
            <person name="Bork P."/>
            <person name="Russell R.B."/>
            <person name="Superti-Furga G."/>
        </authorList>
    </citation>
    <scope>IDENTIFICATION IN A COMPLEX WITH DSL1; TIP20; SEC20; UFE1; USE1 AND SEC22</scope>
</reference>
<comment type="function">
    <text evidence="1 3">Required for protein transport between the Golgi and the endoplasmic reticulum. May contribute to tethering of coatomer-coated retrograde transport vesicles to the ER membrane through interaction with and stabilization of the SNARE complex.</text>
</comment>
<comment type="subunit">
    <text evidence="2 3 4">Component of a peripheral membrane protein complex consisting of DSL1, SEC39/DSL3 and TIP20. Bound to a SNARE complex consisting of UFE1, USE1, SEC20 and SEC22 or YKT6 through direct interaction of TIP20 with SEC20. Interacts with TIP20 and DSL1.</text>
</comment>
<comment type="interaction">
    <interactant intactId="EBI-31898">
        <id>Q12745</id>
    </interactant>
    <interactant intactId="EBI-29249">
        <id>P53847</id>
        <label>DSL1</label>
    </interactant>
    <organismsDiffer>false</organismsDiffer>
    <experiments>15</experiments>
</comment>
<comment type="interaction">
    <interactant intactId="EBI-31898">
        <id>Q12745</id>
    </interactant>
    <interactant intactId="EBI-19396">
        <id>P33891</id>
        <label>TIP20</label>
    </interactant>
    <organismsDiffer>false</organismsDiffer>
    <experiments>5</experiments>
</comment>
<comment type="interaction">
    <interactant intactId="EBI-31898">
        <id>Q12745</id>
    </interactant>
    <interactant intactId="EBI-23881">
        <id>P53146</id>
        <label>USE1</label>
    </interactant>
    <organismsDiffer>false</organismsDiffer>
    <experiments>5</experiments>
</comment>
<comment type="subcellular location">
    <subcellularLocation>
        <location evidence="3">Endoplasmic reticulum membrane</location>
        <topology evidence="3">Peripheral membrane protein</topology>
    </subcellularLocation>
</comment>
<comment type="miscellaneous">
    <text>Cells with a reduced level of SEC39 show a defect in post-translational processing of PRC1/CPY.</text>
</comment>
<comment type="similarity">
    <text evidence="5">Belongs to the SEC39 family.</text>
</comment>
<evidence type="ECO:0000269" key="1">
    <source>
    </source>
</evidence>
<evidence type="ECO:0000269" key="2">
    <source>
    </source>
</evidence>
<evidence type="ECO:0000269" key="3">
    <source>
    </source>
</evidence>
<evidence type="ECO:0000269" key="4">
    <source>
    </source>
</evidence>
<evidence type="ECO:0000305" key="5"/>
<evidence type="ECO:0000312" key="6">
    <source>
        <dbReference type="EMBL" id="AAB67520.1"/>
    </source>
</evidence>
<evidence type="ECO:0000312" key="7">
    <source>
        <dbReference type="EMBL" id="CAA83058.1"/>
    </source>
</evidence>
<evidence type="ECO:0007829" key="8">
    <source>
        <dbReference type="PDB" id="3K8P"/>
    </source>
</evidence>
<name>SEC39_YEAST</name>
<sequence>MLEEQLYLLACIFASRADTRNIKKLSTRLGSQSKYLEILCVLWPELDDPKNLLFLRELEEEVQSPEGEETTDEDVIVELLESDSSLIPLIESDTTTRSNRYHELQEFISKKLNNKTLENFEEWLRERILICNEMIPETPLLYSVLWETAKSKVLSTKFIGWVEGVLKPLDHLNKRLHLIFKINEWEKMPDSELFKIIFDGVEDMQGYIGIADVIEDELAPTLSYGKKWETFITEFFNKQQFSLKSDTNYQLFIKLYYSLEKGVKDNSEASRKLQSNVVDILFHNSENLFNLSSLTHKLDELWSILSGFPDEITIEEQKTITALEMKQFMEFFIKCSTKFSFKEIFAITQEEESAQLAHFSSLCHEEFNKANEISSFLQAMYETVLDISKDDKIFTRISMDEKLYSILEILLQMNEFAYIEAIIERFDYSNNTQIYELLVKFFWHFFNNASNGLRKEPEMKKASQTLQIIQKHMSQRAGTNLTKLEVLLEISDKLSHYSINLNKSHNGARDTAFKPSNILEYRDCPLDIISNLLELNPRLYKDLPTTKSLLFGIYDSLSINREGQTGKVEVDLMVLHIDYALVNLDFGTAYELGKQVFEICQEAGQHMMKALGDEHWLTFYQMGKFVDPNWVDNEIPTEIIVLQMSILGRLLEVCPLEEVEIVTSQWSTLELELSARDLVKDKYALDGQNDNKSKVGGIAREIFHNVTNF</sequence>
<keyword id="KW-0002">3D-structure</keyword>
<keyword id="KW-0256">Endoplasmic reticulum</keyword>
<keyword id="KW-0931">ER-Golgi transport</keyword>
<keyword id="KW-0472">Membrane</keyword>
<keyword id="KW-0653">Protein transport</keyword>
<keyword id="KW-1185">Reference proteome</keyword>
<keyword id="KW-0813">Transport</keyword>
<organism>
    <name type="scientific">Saccharomyces cerevisiae (strain ATCC 204508 / S288c)</name>
    <name type="common">Baker's yeast</name>
    <dbReference type="NCBI Taxonomy" id="559292"/>
    <lineage>
        <taxon>Eukaryota</taxon>
        <taxon>Fungi</taxon>
        <taxon>Dikarya</taxon>
        <taxon>Ascomycota</taxon>
        <taxon>Saccharomycotina</taxon>
        <taxon>Saccharomycetes</taxon>
        <taxon>Saccharomycetales</taxon>
        <taxon>Saccharomycetaceae</taxon>
        <taxon>Saccharomyces</taxon>
    </lineage>
</organism>